<comment type="function">
    <text evidence="1">Catalyzes the synthesis of beta-nicotinate D-ribonucleotide from nicotinate and 5-phospho-D-ribose 1-phosphate at the expense of ATP.</text>
</comment>
<comment type="catalytic activity">
    <reaction evidence="1">
        <text>nicotinate + 5-phospho-alpha-D-ribose 1-diphosphate + ATP + H2O = nicotinate beta-D-ribonucleotide + ADP + phosphate + diphosphate</text>
        <dbReference type="Rhea" id="RHEA:36163"/>
        <dbReference type="ChEBI" id="CHEBI:15377"/>
        <dbReference type="ChEBI" id="CHEBI:30616"/>
        <dbReference type="ChEBI" id="CHEBI:32544"/>
        <dbReference type="ChEBI" id="CHEBI:33019"/>
        <dbReference type="ChEBI" id="CHEBI:43474"/>
        <dbReference type="ChEBI" id="CHEBI:57502"/>
        <dbReference type="ChEBI" id="CHEBI:58017"/>
        <dbReference type="ChEBI" id="CHEBI:456216"/>
        <dbReference type="EC" id="6.3.4.21"/>
    </reaction>
</comment>
<comment type="pathway">
    <text evidence="1">Cofactor biosynthesis; NAD(+) biosynthesis; nicotinate D-ribonucleotide from nicotinate: step 1/1.</text>
</comment>
<comment type="PTM">
    <text evidence="1">Transiently phosphorylated on a His residue during the reaction cycle. Phosphorylation strongly increases the affinity for substrates and increases the rate of nicotinate D-ribonucleotide production. Dephosphorylation regenerates the low-affinity form of the enzyme, leading to product release.</text>
</comment>
<comment type="similarity">
    <text evidence="1">Belongs to the NAPRTase family.</text>
</comment>
<evidence type="ECO:0000255" key="1">
    <source>
        <dbReference type="HAMAP-Rule" id="MF_00570"/>
    </source>
</evidence>
<sequence>MIIHSLLDTDLYKFTMMQAVLHQHPAAQVDYRFKCRTPGVDLAQFVDEISREIDALCRLRLREDEVDYLRSLRFIKPDFADFLALFHLDRKYLSLTASATHPGEIELTIRGPWLHTILFEVPLLAIINEVWFRNTSEPDFEEGRSRLREKVASLRSMPAGCKIADYGTRRRYSRQWHGELLPLLRDGLGEQFVGTSNVYFAKQYGLTPLGTMAHEYLQAFQALGPRLRDSQVAALESWAREYRGDLGIALSDVVGLDAFLRDFDLYFCKLFDGMRHDSGDPFEWGERVIAHLEAHRVDPRTKVLVFSDGLNIDKVMRLYQHFHTRCRLAFGVGTSLTNDLGPTPLQIVIKMVRCNGQPVAKLSDSPGKSMCEDIGYLRYLRDVFGLPPMAEG</sequence>
<protein>
    <recommendedName>
        <fullName evidence="1">Nicotinate phosphoribosyltransferase</fullName>
        <shortName evidence="1">NAPRTase</shortName>
        <ecNumber evidence="1">6.3.4.21</ecNumber>
    </recommendedName>
</protein>
<accession>Q3BPD5</accession>
<reference key="1">
    <citation type="journal article" date="2005" name="J. Bacteriol.">
        <title>Insights into genome plasticity and pathogenicity of the plant pathogenic Bacterium Xanthomonas campestris pv. vesicatoria revealed by the complete genome sequence.</title>
        <authorList>
            <person name="Thieme F."/>
            <person name="Koebnik R."/>
            <person name="Bekel T."/>
            <person name="Berger C."/>
            <person name="Boch J."/>
            <person name="Buettner D."/>
            <person name="Caldana C."/>
            <person name="Gaigalat L."/>
            <person name="Goesmann A."/>
            <person name="Kay S."/>
            <person name="Kirchner O."/>
            <person name="Lanz C."/>
            <person name="Linke B."/>
            <person name="McHardy A.C."/>
            <person name="Meyer F."/>
            <person name="Mittenhuber G."/>
            <person name="Nies D.H."/>
            <person name="Niesbach-Kloesgen U."/>
            <person name="Patschkowski T."/>
            <person name="Rueckert C."/>
            <person name="Rupp O."/>
            <person name="Schneiker S."/>
            <person name="Schuster S.C."/>
            <person name="Vorhoelter F.J."/>
            <person name="Weber E."/>
            <person name="Puehler A."/>
            <person name="Bonas U."/>
            <person name="Bartels D."/>
            <person name="Kaiser O."/>
        </authorList>
    </citation>
    <scope>NUCLEOTIDE SEQUENCE [LARGE SCALE GENOMIC DNA]</scope>
    <source>
        <strain>85-10</strain>
    </source>
</reference>
<gene>
    <name evidence="1" type="primary">pncB</name>
    <name type="ordered locus">XCV3647</name>
</gene>
<organism>
    <name type="scientific">Xanthomonas euvesicatoria pv. vesicatoria (strain 85-10)</name>
    <name type="common">Xanthomonas campestris pv. vesicatoria</name>
    <dbReference type="NCBI Taxonomy" id="316273"/>
    <lineage>
        <taxon>Bacteria</taxon>
        <taxon>Pseudomonadati</taxon>
        <taxon>Pseudomonadota</taxon>
        <taxon>Gammaproteobacteria</taxon>
        <taxon>Lysobacterales</taxon>
        <taxon>Lysobacteraceae</taxon>
        <taxon>Xanthomonas</taxon>
    </lineage>
</organism>
<proteinExistence type="inferred from homology"/>
<dbReference type="EC" id="6.3.4.21" evidence="1"/>
<dbReference type="EMBL" id="AM039952">
    <property type="protein sequence ID" value="CAJ25378.1"/>
    <property type="molecule type" value="Genomic_DNA"/>
</dbReference>
<dbReference type="RefSeq" id="WP_008573756.1">
    <property type="nucleotide sequence ID" value="NZ_CP017190.1"/>
</dbReference>
<dbReference type="SMR" id="Q3BPD5"/>
<dbReference type="STRING" id="456327.BJD11_04460"/>
<dbReference type="GeneID" id="97511717"/>
<dbReference type="KEGG" id="xcv:XCV3647"/>
<dbReference type="eggNOG" id="COG1488">
    <property type="taxonomic scope" value="Bacteria"/>
</dbReference>
<dbReference type="HOGENOM" id="CLU_030991_1_0_6"/>
<dbReference type="UniPathway" id="UPA00253">
    <property type="reaction ID" value="UER00457"/>
</dbReference>
<dbReference type="Proteomes" id="UP000007069">
    <property type="component" value="Chromosome"/>
</dbReference>
<dbReference type="GO" id="GO:0005829">
    <property type="term" value="C:cytosol"/>
    <property type="evidence" value="ECO:0007669"/>
    <property type="project" value="TreeGrafter"/>
</dbReference>
<dbReference type="GO" id="GO:0004516">
    <property type="term" value="F:nicotinate phosphoribosyltransferase activity"/>
    <property type="evidence" value="ECO:0007669"/>
    <property type="project" value="UniProtKB-UniRule"/>
</dbReference>
<dbReference type="GO" id="GO:0034355">
    <property type="term" value="P:NAD biosynthetic process via the salvage pathway"/>
    <property type="evidence" value="ECO:0007669"/>
    <property type="project" value="TreeGrafter"/>
</dbReference>
<dbReference type="CDD" id="cd01401">
    <property type="entry name" value="PncB_like"/>
    <property type="match status" value="1"/>
</dbReference>
<dbReference type="FunFam" id="3.20.140.10:FF:000008">
    <property type="entry name" value="Nicotinate phosphoribosyltransferase"/>
    <property type="match status" value="1"/>
</dbReference>
<dbReference type="Gene3D" id="3.20.140.10">
    <property type="entry name" value="nicotinate phosphoribosyltransferase"/>
    <property type="match status" value="1"/>
</dbReference>
<dbReference type="HAMAP" id="MF_00570">
    <property type="entry name" value="NAPRTase"/>
    <property type="match status" value="1"/>
</dbReference>
<dbReference type="InterPro" id="IPR041525">
    <property type="entry name" value="N/Namide_PRibTrfase"/>
</dbReference>
<dbReference type="InterPro" id="IPR040727">
    <property type="entry name" value="NAPRTase_N"/>
</dbReference>
<dbReference type="InterPro" id="IPR006406">
    <property type="entry name" value="Nic_PRibTrfase"/>
</dbReference>
<dbReference type="InterPro" id="IPR007229">
    <property type="entry name" value="Nic_PRibTrfase-Fam"/>
</dbReference>
<dbReference type="InterPro" id="IPR036068">
    <property type="entry name" value="Nicotinate_pribotase-like_C"/>
</dbReference>
<dbReference type="NCBIfam" id="TIGR01514">
    <property type="entry name" value="NAPRTase"/>
    <property type="match status" value="1"/>
</dbReference>
<dbReference type="NCBIfam" id="NF003704">
    <property type="entry name" value="PRK05321.1"/>
    <property type="match status" value="1"/>
</dbReference>
<dbReference type="PANTHER" id="PTHR11098">
    <property type="entry name" value="NICOTINATE PHOSPHORIBOSYLTRANSFERASE"/>
    <property type="match status" value="1"/>
</dbReference>
<dbReference type="PANTHER" id="PTHR11098:SF1">
    <property type="entry name" value="NICOTINATE PHOSPHORIBOSYLTRANSFERASE"/>
    <property type="match status" value="1"/>
</dbReference>
<dbReference type="Pfam" id="PF04095">
    <property type="entry name" value="NAPRTase"/>
    <property type="match status" value="1"/>
</dbReference>
<dbReference type="Pfam" id="PF17767">
    <property type="entry name" value="NAPRTase_N"/>
    <property type="match status" value="1"/>
</dbReference>
<dbReference type="PIRSF" id="PIRSF000484">
    <property type="entry name" value="NAPRT"/>
    <property type="match status" value="1"/>
</dbReference>
<dbReference type="SUPFAM" id="SSF51690">
    <property type="entry name" value="Nicotinate/Quinolinate PRTase C-terminal domain-like"/>
    <property type="match status" value="1"/>
</dbReference>
<dbReference type="SUPFAM" id="SSF54675">
    <property type="entry name" value="Nicotinate/Quinolinate PRTase N-terminal domain-like"/>
    <property type="match status" value="1"/>
</dbReference>
<feature type="chain" id="PRO_1000025018" description="Nicotinate phosphoribosyltransferase">
    <location>
        <begin position="1"/>
        <end position="392"/>
    </location>
</feature>
<feature type="modified residue" description="Phosphohistidine; by autocatalysis" evidence="1">
    <location>
        <position position="214"/>
    </location>
</feature>
<keyword id="KW-0436">Ligase</keyword>
<keyword id="KW-0597">Phosphoprotein</keyword>
<keyword id="KW-0662">Pyridine nucleotide biosynthesis</keyword>
<name>PNCB_XANE5</name>